<gene>
    <name type="primary">RABA4C</name>
    <name type="synonym">SMG1</name>
    <name type="ordered locus">At5g47960</name>
    <name type="ORF">K16F13.4</name>
</gene>
<sequence length="223" mass="24839">MSKFQSNFNQKIDYVFKVVLIGDSAVGKSQLLARFSRNEFSIESKATIGVEFQTRTLEIDRKTIKAQIWDTAGQERYRAVTSAYYRGAVGAMLVYDITKRQSFDHVARWLEELRGHADKNIVIMLIGNKTDLGTLRAVPTEDAKEFAQRENLFFMETSALDSNNVEPSFLTVLTEIYRIVSKKNLVANEEGESGGDSSLLQGTKIVVAGEETESKGKGCCGTS</sequence>
<reference key="1">
    <citation type="submission" date="1999-12" db="EMBL/GenBank/DDBJ databases">
        <title>Characterization of cDNA clone encoding a Ras-related small molecular weight g-protein in Arabidopsis.</title>
        <authorList>
            <person name="Kang J."/>
            <person name="Park C."/>
        </authorList>
    </citation>
    <scope>NUCLEOTIDE SEQUENCE [MRNA]</scope>
</reference>
<reference key="2">
    <citation type="journal article" date="2000" name="DNA Res.">
        <title>Structural analysis of Arabidopsis thaliana chromosome 5. X. Sequence features of the regions of 3,076,755 bp covered by sixty P1 and TAC clones.</title>
        <authorList>
            <person name="Sato S."/>
            <person name="Nakamura Y."/>
            <person name="Kaneko T."/>
            <person name="Katoh T."/>
            <person name="Asamizu E."/>
            <person name="Kotani H."/>
            <person name="Tabata S."/>
        </authorList>
    </citation>
    <scope>NUCLEOTIDE SEQUENCE [LARGE SCALE GENOMIC DNA]</scope>
    <source>
        <strain>cv. Columbia</strain>
    </source>
</reference>
<reference key="3">
    <citation type="journal article" date="2017" name="Plant J.">
        <title>Araport11: a complete reannotation of the Arabidopsis thaliana reference genome.</title>
        <authorList>
            <person name="Cheng C.Y."/>
            <person name="Krishnakumar V."/>
            <person name="Chan A.P."/>
            <person name="Thibaud-Nissen F."/>
            <person name="Schobel S."/>
            <person name="Town C.D."/>
        </authorList>
    </citation>
    <scope>GENOME REANNOTATION</scope>
    <source>
        <strain>cv. Columbia</strain>
    </source>
</reference>
<reference key="4">
    <citation type="submission" date="2006-03" db="EMBL/GenBank/DDBJ databases">
        <title>Arabidopsis ORF clones.</title>
        <authorList>
            <person name="Kim C.J."/>
            <person name="Chen H."/>
            <person name="Shinn P."/>
            <person name="Ecker J.R."/>
        </authorList>
    </citation>
    <scope>NUCLEOTIDE SEQUENCE [LARGE SCALE MRNA]</scope>
    <source>
        <strain>cv. Columbia</strain>
    </source>
</reference>
<reference key="5">
    <citation type="journal article" date="2003" name="Plant Physiol.">
        <title>Analysis of the small GTPase gene superfamily of Arabidopsis.</title>
        <authorList>
            <person name="Vernoud V."/>
            <person name="Horton A.C."/>
            <person name="Yang Z."/>
            <person name="Nielsen E."/>
        </authorList>
    </citation>
    <scope>GENE FAMILY</scope>
    <scope>NOMENCLATURE</scope>
</reference>
<comment type="function">
    <text evidence="1">Intracellular vesicle trafficking and protein transport.</text>
</comment>
<comment type="subcellular location">
    <subcellularLocation>
        <location evidence="2">Cell membrane</location>
        <topology evidence="2">Lipid-anchor</topology>
        <orientation evidence="2">Cytoplasmic side</orientation>
    </subcellularLocation>
</comment>
<comment type="similarity">
    <text evidence="2">Belongs to the small GTPase superfamily. Rab family.</text>
</comment>
<protein>
    <recommendedName>
        <fullName>Ras-related protein RABA4c</fullName>
        <shortName>AtRABA4c</shortName>
    </recommendedName>
    <alternativeName>
        <fullName>Ras-related protein SMG1</fullName>
    </alternativeName>
</protein>
<name>RAA4C_ARATH</name>
<dbReference type="EMBL" id="AF218121">
    <property type="protein sequence ID" value="AAG44121.1"/>
    <property type="molecule type" value="mRNA"/>
</dbReference>
<dbReference type="EMBL" id="AB024025">
    <property type="protein sequence ID" value="BAB09048.1"/>
    <property type="molecule type" value="Genomic_DNA"/>
</dbReference>
<dbReference type="EMBL" id="CP002688">
    <property type="protein sequence ID" value="AED95599.1"/>
    <property type="molecule type" value="Genomic_DNA"/>
</dbReference>
<dbReference type="EMBL" id="BT024842">
    <property type="protein sequence ID" value="ABD60725.1"/>
    <property type="molecule type" value="mRNA"/>
</dbReference>
<dbReference type="RefSeq" id="NP_199607.1">
    <property type="nucleotide sequence ID" value="NM_124170.3"/>
</dbReference>
<dbReference type="SMR" id="Q9FE79"/>
<dbReference type="BioGRID" id="20095">
    <property type="interactions" value="1"/>
</dbReference>
<dbReference type="FunCoup" id="Q9FE79">
    <property type="interactions" value="381"/>
</dbReference>
<dbReference type="STRING" id="3702.Q9FE79"/>
<dbReference type="GlyGen" id="Q9FE79">
    <property type="glycosylation" value="1 site"/>
</dbReference>
<dbReference type="PaxDb" id="3702-AT5G47960.1"/>
<dbReference type="ProteomicsDB" id="236499"/>
<dbReference type="EnsemblPlants" id="AT5G47960.1">
    <property type="protein sequence ID" value="AT5G47960.1"/>
    <property type="gene ID" value="AT5G47960"/>
</dbReference>
<dbReference type="GeneID" id="834847"/>
<dbReference type="Gramene" id="AT5G47960.1">
    <property type="protein sequence ID" value="AT5G47960.1"/>
    <property type="gene ID" value="AT5G47960"/>
</dbReference>
<dbReference type="KEGG" id="ath:AT5G47960"/>
<dbReference type="Araport" id="AT5G47960"/>
<dbReference type="TAIR" id="AT5G47960">
    <property type="gene designation" value="RABA4C"/>
</dbReference>
<dbReference type="eggNOG" id="KOG0087">
    <property type="taxonomic scope" value="Eukaryota"/>
</dbReference>
<dbReference type="HOGENOM" id="CLU_041217_23_0_1"/>
<dbReference type="InParanoid" id="Q9FE79"/>
<dbReference type="OMA" id="SDHTQEN"/>
<dbReference type="OrthoDB" id="9989112at2759"/>
<dbReference type="PhylomeDB" id="Q9FE79"/>
<dbReference type="PRO" id="PR:Q9FE79"/>
<dbReference type="Proteomes" id="UP000006548">
    <property type="component" value="Chromosome 5"/>
</dbReference>
<dbReference type="ExpressionAtlas" id="Q9FE79">
    <property type="expression patterns" value="baseline and differential"/>
</dbReference>
<dbReference type="GO" id="GO:0005886">
    <property type="term" value="C:plasma membrane"/>
    <property type="evidence" value="ECO:0007669"/>
    <property type="project" value="UniProtKB-SubCell"/>
</dbReference>
<dbReference type="GO" id="GO:0009536">
    <property type="term" value="C:plastid"/>
    <property type="evidence" value="ECO:0007005"/>
    <property type="project" value="TAIR"/>
</dbReference>
<dbReference type="GO" id="GO:0005525">
    <property type="term" value="F:GTP binding"/>
    <property type="evidence" value="ECO:0007669"/>
    <property type="project" value="UniProtKB-KW"/>
</dbReference>
<dbReference type="GO" id="GO:0003924">
    <property type="term" value="F:GTPase activity"/>
    <property type="evidence" value="ECO:0007669"/>
    <property type="project" value="InterPro"/>
</dbReference>
<dbReference type="GO" id="GO:0015031">
    <property type="term" value="P:protein transport"/>
    <property type="evidence" value="ECO:0007669"/>
    <property type="project" value="UniProtKB-KW"/>
</dbReference>
<dbReference type="CDD" id="cd01868">
    <property type="entry name" value="Rab11_like"/>
    <property type="match status" value="1"/>
</dbReference>
<dbReference type="FunFam" id="3.40.50.300:FF:000274">
    <property type="entry name" value="ras-related protein RABA5a"/>
    <property type="match status" value="1"/>
</dbReference>
<dbReference type="Gene3D" id="3.40.50.300">
    <property type="entry name" value="P-loop containing nucleotide triphosphate hydrolases"/>
    <property type="match status" value="1"/>
</dbReference>
<dbReference type="InterPro" id="IPR027417">
    <property type="entry name" value="P-loop_NTPase"/>
</dbReference>
<dbReference type="InterPro" id="IPR050209">
    <property type="entry name" value="Rab_GTPases_membrane_traffic"/>
</dbReference>
<dbReference type="InterPro" id="IPR005225">
    <property type="entry name" value="Small_GTP-bd"/>
</dbReference>
<dbReference type="InterPro" id="IPR001806">
    <property type="entry name" value="Small_GTPase"/>
</dbReference>
<dbReference type="NCBIfam" id="TIGR00231">
    <property type="entry name" value="small_GTP"/>
    <property type="match status" value="1"/>
</dbReference>
<dbReference type="PANTHER" id="PTHR47979">
    <property type="entry name" value="DRAB11-RELATED"/>
    <property type="match status" value="1"/>
</dbReference>
<dbReference type="Pfam" id="PF00071">
    <property type="entry name" value="Ras"/>
    <property type="match status" value="1"/>
</dbReference>
<dbReference type="PRINTS" id="PR00449">
    <property type="entry name" value="RASTRNSFRMNG"/>
</dbReference>
<dbReference type="SMART" id="SM00177">
    <property type="entry name" value="ARF"/>
    <property type="match status" value="1"/>
</dbReference>
<dbReference type="SMART" id="SM00175">
    <property type="entry name" value="RAB"/>
    <property type="match status" value="1"/>
</dbReference>
<dbReference type="SMART" id="SM00176">
    <property type="entry name" value="RAN"/>
    <property type="match status" value="1"/>
</dbReference>
<dbReference type="SMART" id="SM00173">
    <property type="entry name" value="RAS"/>
    <property type="match status" value="1"/>
</dbReference>
<dbReference type="SMART" id="SM00174">
    <property type="entry name" value="RHO"/>
    <property type="match status" value="1"/>
</dbReference>
<dbReference type="SUPFAM" id="SSF52540">
    <property type="entry name" value="P-loop containing nucleoside triphosphate hydrolases"/>
    <property type="match status" value="1"/>
</dbReference>
<dbReference type="PROSITE" id="PS51419">
    <property type="entry name" value="RAB"/>
    <property type="match status" value="1"/>
</dbReference>
<organism>
    <name type="scientific">Arabidopsis thaliana</name>
    <name type="common">Mouse-ear cress</name>
    <dbReference type="NCBI Taxonomy" id="3702"/>
    <lineage>
        <taxon>Eukaryota</taxon>
        <taxon>Viridiplantae</taxon>
        <taxon>Streptophyta</taxon>
        <taxon>Embryophyta</taxon>
        <taxon>Tracheophyta</taxon>
        <taxon>Spermatophyta</taxon>
        <taxon>Magnoliopsida</taxon>
        <taxon>eudicotyledons</taxon>
        <taxon>Gunneridae</taxon>
        <taxon>Pentapetalae</taxon>
        <taxon>rosids</taxon>
        <taxon>malvids</taxon>
        <taxon>Brassicales</taxon>
        <taxon>Brassicaceae</taxon>
        <taxon>Camelineae</taxon>
        <taxon>Arabidopsis</taxon>
    </lineage>
</organism>
<keyword id="KW-1003">Cell membrane</keyword>
<keyword id="KW-0342">GTP-binding</keyword>
<keyword id="KW-0449">Lipoprotein</keyword>
<keyword id="KW-0472">Membrane</keyword>
<keyword id="KW-0547">Nucleotide-binding</keyword>
<keyword id="KW-0636">Prenylation</keyword>
<keyword id="KW-0653">Protein transport</keyword>
<keyword id="KW-1185">Reference proteome</keyword>
<keyword id="KW-0813">Transport</keyword>
<accession>Q9FE79</accession>
<proteinExistence type="evidence at transcript level"/>
<evidence type="ECO:0000250" key="1"/>
<evidence type="ECO:0000305" key="2"/>
<feature type="chain" id="PRO_0000407346" description="Ras-related protein RABA4c">
    <location>
        <begin position="1"/>
        <end position="223"/>
    </location>
</feature>
<feature type="short sequence motif" description="Effector region" evidence="1">
    <location>
        <begin position="44"/>
        <end position="52"/>
    </location>
</feature>
<feature type="binding site" evidence="1">
    <location>
        <begin position="22"/>
        <end position="29"/>
    </location>
    <ligand>
        <name>GTP</name>
        <dbReference type="ChEBI" id="CHEBI:37565"/>
    </ligand>
</feature>
<feature type="binding site" evidence="1">
    <location>
        <begin position="70"/>
        <end position="74"/>
    </location>
    <ligand>
        <name>GTP</name>
        <dbReference type="ChEBI" id="CHEBI:37565"/>
    </ligand>
</feature>
<feature type="binding site" evidence="1">
    <location>
        <begin position="128"/>
        <end position="131"/>
    </location>
    <ligand>
        <name>GTP</name>
        <dbReference type="ChEBI" id="CHEBI:37565"/>
    </ligand>
</feature>
<feature type="binding site" evidence="1">
    <location>
        <begin position="158"/>
        <end position="159"/>
    </location>
    <ligand>
        <name>GTP</name>
        <dbReference type="ChEBI" id="CHEBI:37565"/>
    </ligand>
</feature>
<feature type="lipid moiety-binding region" description="S-geranylgeranyl cysteine" evidence="1">
    <location>
        <position position="219"/>
    </location>
</feature>
<feature type="lipid moiety-binding region" description="S-geranylgeranyl cysteine" evidence="1">
    <location>
        <position position="220"/>
    </location>
</feature>